<gene>
    <name type="primary">SDCCAG8</name>
    <name type="synonym">CCCAP</name>
    <name type="synonym">NPHP10</name>
    <name type="ORF">HSPC085</name>
</gene>
<organism>
    <name type="scientific">Homo sapiens</name>
    <name type="common">Human</name>
    <dbReference type="NCBI Taxonomy" id="9606"/>
    <lineage>
        <taxon>Eukaryota</taxon>
        <taxon>Metazoa</taxon>
        <taxon>Chordata</taxon>
        <taxon>Craniata</taxon>
        <taxon>Vertebrata</taxon>
        <taxon>Euteleostomi</taxon>
        <taxon>Mammalia</taxon>
        <taxon>Eutheria</taxon>
        <taxon>Euarchontoglires</taxon>
        <taxon>Primates</taxon>
        <taxon>Haplorrhini</taxon>
        <taxon>Catarrhini</taxon>
        <taxon>Hominidae</taxon>
        <taxon>Homo</taxon>
    </lineage>
</organism>
<keyword id="KW-0025">Alternative splicing</keyword>
<keyword id="KW-0083">Bardet-Biedl syndrome</keyword>
<keyword id="KW-0965">Cell junction</keyword>
<keyword id="KW-0966">Cell projection</keyword>
<keyword id="KW-1186">Ciliopathy</keyword>
<keyword id="KW-0970">Cilium biogenesis/degradation</keyword>
<keyword id="KW-0175">Coiled coil</keyword>
<keyword id="KW-0963">Cytoplasm</keyword>
<keyword id="KW-0206">Cytoskeleton</keyword>
<keyword id="KW-0901">Leber congenital amaurosis</keyword>
<keyword id="KW-0983">Nephronophthisis</keyword>
<keyword id="KW-0550">Obesity</keyword>
<keyword id="KW-0597">Phosphoprotein</keyword>
<keyword id="KW-1267">Proteomics identification</keyword>
<keyword id="KW-1185">Reference proteome</keyword>
<keyword id="KW-0980">Senior-Loken syndrome</keyword>
<sequence length="713" mass="82682">MAKSPENSTLEEILGQYQRSLREHASRSIHQLTCALKEGDVTIGEDAPNLSFSTSVGNEDARTAWPELQQSHAVNQLKDLLRQQADKESEVSPSRRRKMSPLRSLEHEETNMPTMHDLVHTINDQSQYIHHLEAEVKFCKEELSGMKNKIQVVVLENEGLQQQLKSQRQEETLREQTLLDASGNMHNSWITTGEDSGVGETSKRPFSHDNADFGKAASAGEQLELEKLKLTYEEKCEIEESQLKFLRNDLAEYQRTCEDLKEQLKHKEFLLAANTCNRVGGLCLKCAQHEAVLSQTHTNVHMQTIERLVKERDDLMSALVSVRSSLADTQQREASAYEQVKQVLQISEEANFEKTKALIQCDQLRKELERQAERLEKELASQQEKRAIEKDMMKKEITKEREYMGSKMLILSQNIAQLEAQVEKVTKEKISAINQLEEIQSQLASREMDVTKVCGEMRYQLNKTNMEKDEAEKEHREFRAKTNRDLEIKDQEIEKLRIELDESKQHLEQEQQKAALAREECLRLTELLGESEHQLHLTRQEKDSIQQSFSKEAKAQALQAQQREQELTQKIQQMEAQHDKTENEQYLLLTSQNTFLTKLKEECCTLAKKLEQISQKTRSEIAQLSQEKRYTYDKLGKLQRRNEELEEQCVQHGRVHETMKQRLRQLDKHSQATAQQLVQLLSKQNQLLLERQSLSEEVDRLRTQLPSMPQSDC</sequence>
<proteinExistence type="evidence at protein level"/>
<evidence type="ECO:0000250" key="1"/>
<evidence type="ECO:0000250" key="2">
    <source>
        <dbReference type="UniProtKB" id="Q80UF4"/>
    </source>
</evidence>
<evidence type="ECO:0000255" key="3"/>
<evidence type="ECO:0000256" key="4">
    <source>
        <dbReference type="SAM" id="MobiDB-lite"/>
    </source>
</evidence>
<evidence type="ECO:0000269" key="5">
    <source>
    </source>
</evidence>
<evidence type="ECO:0000269" key="6">
    <source>
    </source>
</evidence>
<evidence type="ECO:0000269" key="7">
    <source>
    </source>
</evidence>
<evidence type="ECO:0000269" key="8">
    <source>
    </source>
</evidence>
<evidence type="ECO:0000269" key="9">
    <source>
    </source>
</evidence>
<evidence type="ECO:0000303" key="10">
    <source>
    </source>
</evidence>
<evidence type="ECO:0000303" key="11">
    <source>
    </source>
</evidence>
<evidence type="ECO:0000303" key="12">
    <source>
    </source>
</evidence>
<evidence type="ECO:0007744" key="13">
    <source>
    </source>
</evidence>
<reference key="1">
    <citation type="journal article" date="2003" name="Gene">
        <title>Identification and characterization of the novel centrosome-associated protein CCCAP.</title>
        <authorList>
            <person name="Kenedy A.A."/>
            <person name="Cohen K.J."/>
            <person name="Loveys D.A."/>
            <person name="Kato G.J."/>
            <person name="Dang C.V."/>
        </authorList>
    </citation>
    <scope>NUCLEOTIDE SEQUENCE [MRNA] (ISOFORMS 1 AND 4)</scope>
    <scope>ALTERNATIVE SPLICING</scope>
    <scope>SUBCELLULAR LOCATION</scope>
    <source>
        <tissue>Placenta</tissue>
    </source>
</reference>
<reference key="2">
    <citation type="journal article" date="2004" name="Genome Res.">
        <title>The status, quality, and expansion of the NIH full-length cDNA project: the Mammalian Gene Collection (MGC).</title>
        <authorList>
            <consortium name="The MGC Project Team"/>
        </authorList>
    </citation>
    <scope>NUCLEOTIDE SEQUENCE [LARGE SCALE MRNA] (ISOFORM 2)</scope>
    <scope>NUCLEOTIDE SEQUENCE [LARGE SCALE MRNA] OF 465-713 (ISOFORM 1)</scope>
    <source>
        <tissue>Brain</tissue>
        <tissue>Hippocampus</tissue>
        <tissue>Lung</tissue>
        <tissue>Testis</tissue>
    </source>
</reference>
<reference key="3">
    <citation type="journal article" date="2000" name="Genome Res.">
        <title>Cloning and functional analysis of cDNAs with open reading frames for 300 previously undefined genes expressed in CD34+ hematopoietic stem/progenitor cells.</title>
        <authorList>
            <person name="Zhang Q.-H."/>
            <person name="Ye M."/>
            <person name="Wu X.-Y."/>
            <person name="Ren S.-X."/>
            <person name="Zhao M."/>
            <person name="Zhao C.-J."/>
            <person name="Fu G."/>
            <person name="Shen Y."/>
            <person name="Fan H.-Y."/>
            <person name="Lu G."/>
            <person name="Zhong M."/>
            <person name="Xu X.-R."/>
            <person name="Han Z.-G."/>
            <person name="Zhang J.-W."/>
            <person name="Tao J."/>
            <person name="Huang Q.-H."/>
            <person name="Zhou J."/>
            <person name="Hu G.-X."/>
            <person name="Gu J."/>
            <person name="Chen S.-J."/>
            <person name="Chen Z."/>
        </authorList>
    </citation>
    <scope>NUCLEOTIDE SEQUENCE [LARGE SCALE MRNA] OF 1-393 (ISOFORM 1)</scope>
    <source>
        <tissue>Umbilical cord blood</tissue>
    </source>
</reference>
<reference key="4">
    <citation type="journal article" date="1998" name="Int. J. Cancer">
        <title>Characterization of human colon cancer antigens recognized by autologous antibodies.</title>
        <authorList>
            <person name="Scanlan M.J."/>
            <person name="Chen Y.-T."/>
            <person name="Williamson B."/>
            <person name="Gure A.O."/>
            <person name="Stockert E."/>
            <person name="Gordan J.D."/>
            <person name="Tuereci O."/>
            <person name="Sahin U."/>
            <person name="Pfreundschuh M."/>
            <person name="Old L.J."/>
        </authorList>
    </citation>
    <scope>NUCLEOTIDE SEQUENCE [MRNA] OF 221-713 (ISOFORM 3)</scope>
    <scope>TISSUE SPECIFICITY</scope>
    <source>
        <tissue>Colon carcinoma</tissue>
    </source>
</reference>
<reference key="5">
    <citation type="journal article" date="2010" name="Nat. Genet.">
        <title>Candidate exome capture identifies mutation of SDCCAG8 as the cause of a retinal-renal ciliopathy.</title>
        <authorList>
            <person name="Otto E.A."/>
            <person name="Hurd T.W."/>
            <person name="Airik R."/>
            <person name="Chaki M."/>
            <person name="Zhou W."/>
            <person name="Stoetzel C."/>
            <person name="Patil S.B."/>
            <person name="Levy S."/>
            <person name="Ghosh A.K."/>
            <person name="Murga-Zamalloa C.A."/>
            <person name="van Reeuwijk J."/>
            <person name="Letteboer S.J."/>
            <person name="Sang L."/>
            <person name="Giles R.H."/>
            <person name="Liu Q."/>
            <person name="Coene K.L."/>
            <person name="Estrada-Cuzcano A."/>
            <person name="Collin R.W."/>
            <person name="McLaughlin H.M."/>
            <person name="Held S."/>
            <person name="Kasanuki J.M."/>
            <person name="Ramaswami G."/>
            <person name="Conte J."/>
            <person name="Lopez I."/>
            <person name="Washburn J."/>
            <person name="Macdonald J."/>
            <person name="Hu J."/>
            <person name="Yamashita Y."/>
            <person name="Maher E.R."/>
            <person name="Guay-Woodford L.M."/>
            <person name="Neumann H.P."/>
            <person name="Obermuller N."/>
            <person name="Koenekoop R.K."/>
            <person name="Bergmann C."/>
            <person name="Bei X."/>
            <person name="Lewis R.A."/>
            <person name="Katsanis N."/>
            <person name="Lopes V."/>
            <person name="Williams D.S."/>
            <person name="Lyons R.H."/>
            <person name="Dang C.V."/>
            <person name="Brito D.A."/>
            <person name="Dias M.B."/>
            <person name="Zhang X."/>
            <person name="Cavalcoli J.D."/>
            <person name="Nurnberg G."/>
            <person name="Nurnberg P."/>
            <person name="Pierce E.A."/>
            <person name="Jackson P.K."/>
            <person name="Antignac C."/>
            <person name="Saunier S."/>
            <person name="Roepman R."/>
            <person name="Dollfus H."/>
            <person name="Khanna H."/>
            <person name="Hildebrandt F."/>
        </authorList>
    </citation>
    <scope>SUBCELLULAR LOCATION</scope>
    <scope>INTERACTION WITH OFD1</scope>
    <scope>INVOLVEMENT IN SLSN7</scope>
    <scope>INVOLVEMENT IN BBS16</scope>
    <scope>ALTERNATIVE SPLICING</scope>
</reference>
<reference key="6">
    <citation type="journal article" date="2012" name="Hum. Mol. Genet.">
        <title>FAM161A, associated with retinitis pigmentosa, is a component of the cilia-basal body complex and interacts with proteins involved in ciliopathies.</title>
        <authorList>
            <person name="Di Gioia S.A."/>
            <person name="Letteboer S.J."/>
            <person name="Kostic C."/>
            <person name="Bandah-Rozenfeld D."/>
            <person name="Hetterschijt L."/>
            <person name="Sharon D."/>
            <person name="Arsenijevic Y."/>
            <person name="Roepman R."/>
            <person name="Rivolta C."/>
        </authorList>
    </citation>
    <scope>INTERACTION WITH FAM161A</scope>
</reference>
<reference key="7">
    <citation type="journal article" date="2012" name="Ophthalmic Genet.">
        <title>Mutational analysis of SDCCAG8 in Bardet-Biedl syndrome patients with renal involvement and absent polydactyly.</title>
        <authorList>
            <person name="Billingsley G."/>
            <person name="Vincent A."/>
            <person name="Deveault C."/>
            <person name="Heon E."/>
        </authorList>
    </citation>
    <scope>INVOLVEMENT IN BBS16</scope>
</reference>
<reference key="8">
    <citation type="journal article" date="2013" name="J. Proteome Res.">
        <title>Toward a comprehensive characterization of a human cancer cell phosphoproteome.</title>
        <authorList>
            <person name="Zhou H."/>
            <person name="Di Palma S."/>
            <person name="Preisinger C."/>
            <person name="Peng M."/>
            <person name="Polat A.N."/>
            <person name="Heck A.J."/>
            <person name="Mohammed S."/>
        </authorList>
    </citation>
    <scope>PHOSPHORYLATION [LARGE SCALE ANALYSIS] AT SER-4 AND SER-28</scope>
    <scope>IDENTIFICATION BY MASS SPECTROMETRY [LARGE SCALE ANALYSIS]</scope>
    <source>
        <tissue>Cervix carcinoma</tissue>
        <tissue>Erythroleukemia</tissue>
    </source>
</reference>
<reference key="9">
    <citation type="journal article" date="2016" name="PLoS ONE">
        <title>SDCCAG8 interacts with RAB effector proteins RABEP2 and ERC1 and is required for Hedgehog Signaling.</title>
        <authorList>
            <person name="Airik R."/>
            <person name="Schueler M."/>
            <person name="Airik M."/>
            <person name="Cho J."/>
            <person name="Ulanowicz K.A."/>
            <person name="Porath J.D."/>
            <person name="Hurd T.W."/>
            <person name="Bekker-Jensen S."/>
            <person name="Schroeder J.M."/>
            <person name="Andersen J.S."/>
            <person name="Hildebrandt F."/>
        </authorList>
    </citation>
    <scope>FUNCTION</scope>
    <scope>SUBCELLULAR LOCATION</scope>
    <scope>INTERACTION WITH RABEP2; ERC1 AND CEP131</scope>
</reference>
<name>SDCG8_HUMAN</name>
<protein>
    <recommendedName>
        <fullName>Serologically defined colon cancer antigen 8</fullName>
    </recommendedName>
    <alternativeName>
        <fullName>Antigen NY-CO-8</fullName>
    </alternativeName>
    <alternativeName>
        <fullName>Centrosomal colon cancer autoantigen protein</fullName>
        <shortName>hCCCAP</shortName>
    </alternativeName>
</protein>
<feature type="chain" id="PRO_0000076310" description="Serologically defined colon cancer antigen 8">
    <location>
        <begin position="1"/>
        <end position="713"/>
    </location>
</feature>
<feature type="region of interest" description="Disordered" evidence="4">
    <location>
        <begin position="84"/>
        <end position="103"/>
    </location>
</feature>
<feature type="region of interest" description="Disordered" evidence="4">
    <location>
        <begin position="194"/>
        <end position="215"/>
    </location>
</feature>
<feature type="region of interest" description="Sufficient for homodimerization" evidence="1">
    <location>
        <begin position="216"/>
        <end position="713"/>
    </location>
</feature>
<feature type="region of interest" description="Mediates interaction with OFD1" evidence="5">
    <location>
        <begin position="533"/>
        <end position="713"/>
    </location>
</feature>
<feature type="coiled-coil region" evidence="3">
    <location>
        <begin position="129"/>
        <end position="175"/>
    </location>
</feature>
<feature type="coiled-coil region" evidence="3">
    <location>
        <begin position="223"/>
        <end position="273"/>
    </location>
</feature>
<feature type="coiled-coil region" evidence="3">
    <location>
        <begin position="348"/>
        <end position="707"/>
    </location>
</feature>
<feature type="compositionally biased region" description="Basic and acidic residues" evidence="4">
    <location>
        <begin position="201"/>
        <end position="212"/>
    </location>
</feature>
<feature type="modified residue" description="Phosphoserine" evidence="13">
    <location>
        <position position="4"/>
    </location>
</feature>
<feature type="modified residue" description="Phosphoserine" evidence="13">
    <location>
        <position position="28"/>
    </location>
</feature>
<feature type="splice variant" id="VSP_016949" description="In isoform 4." evidence="10">
    <location>
        <begin position="183"/>
        <end position="226"/>
    </location>
</feature>
<feature type="splice variant" id="VSP_016950" description="In isoform 3." evidence="12">
    <original>EQLEL</original>
    <variation>LLDAS</variation>
    <location>
        <begin position="221"/>
        <end position="225"/>
    </location>
</feature>
<feature type="splice variant" id="VSP_016951" description="In isoform 2." evidence="11">
    <original>ALIQ</original>
    <variation>HPSQ</variation>
    <location>
        <begin position="357"/>
        <end position="360"/>
    </location>
</feature>
<feature type="splice variant" id="VSP_016952" description="In isoform 2." evidence="11">
    <location>
        <begin position="361"/>
        <end position="713"/>
    </location>
</feature>
<feature type="splice variant" id="VSP_016953" description="In isoform 3." evidence="12">
    <location>
        <begin position="538"/>
        <end position="616"/>
    </location>
</feature>
<feature type="sequence variant" id="VAR_051333" description="In dbSNP:rs2275155.">
    <original>E</original>
    <variation>D</variation>
    <location>
        <position position="378"/>
    </location>
</feature>
<dbReference type="EMBL" id="AF250731">
    <property type="protein sequence ID" value="AAO27830.1"/>
    <property type="molecule type" value="mRNA"/>
</dbReference>
<dbReference type="EMBL" id="BC032454">
    <property type="protein sequence ID" value="AAH32454.1"/>
    <property type="molecule type" value="mRNA"/>
</dbReference>
<dbReference type="EMBL" id="BC045832">
    <property type="protein sequence ID" value="AAH45832.1"/>
    <property type="molecule type" value="mRNA"/>
</dbReference>
<dbReference type="EMBL" id="AF161348">
    <property type="protein sequence ID" value="AAF28908.1"/>
    <property type="molecule type" value="mRNA"/>
</dbReference>
<dbReference type="EMBL" id="AF039690">
    <property type="protein sequence ID" value="AAC18039.1"/>
    <property type="molecule type" value="mRNA"/>
</dbReference>
<dbReference type="CCDS" id="CCDS31075.1">
    <molecule id="Q86SQ7-1"/>
</dbReference>
<dbReference type="RefSeq" id="NP_006633.1">
    <molecule id="Q86SQ7-1"/>
    <property type="nucleotide sequence ID" value="NM_006642.5"/>
</dbReference>
<dbReference type="RefSeq" id="XP_005273080.1">
    <property type="nucleotide sequence ID" value="XM_005273023.4"/>
</dbReference>
<dbReference type="SMR" id="Q86SQ7"/>
<dbReference type="BioGRID" id="116020">
    <property type="interactions" value="27"/>
</dbReference>
<dbReference type="FunCoup" id="Q86SQ7">
    <property type="interactions" value="1435"/>
</dbReference>
<dbReference type="IntAct" id="Q86SQ7">
    <property type="interactions" value="51"/>
</dbReference>
<dbReference type="MINT" id="Q86SQ7"/>
<dbReference type="STRING" id="9606.ENSP00000355499"/>
<dbReference type="iPTMnet" id="Q86SQ7"/>
<dbReference type="PhosphoSitePlus" id="Q86SQ7"/>
<dbReference type="BioMuta" id="SDCCAG8"/>
<dbReference type="DMDM" id="74713839"/>
<dbReference type="jPOST" id="Q86SQ7"/>
<dbReference type="MassIVE" id="Q86SQ7"/>
<dbReference type="PaxDb" id="9606-ENSP00000355499"/>
<dbReference type="PeptideAtlas" id="Q86SQ7"/>
<dbReference type="ProteomicsDB" id="69616">
    <molecule id="Q86SQ7-1"/>
</dbReference>
<dbReference type="ProteomicsDB" id="69617">
    <molecule id="Q86SQ7-2"/>
</dbReference>
<dbReference type="ProteomicsDB" id="69618">
    <molecule id="Q86SQ7-3"/>
</dbReference>
<dbReference type="ProteomicsDB" id="69619">
    <molecule id="Q86SQ7-4"/>
</dbReference>
<dbReference type="Pumba" id="Q86SQ7"/>
<dbReference type="Antibodypedia" id="34709">
    <property type="antibodies" value="246 antibodies from 32 providers"/>
</dbReference>
<dbReference type="DNASU" id="10806"/>
<dbReference type="Ensembl" id="ENST00000366541.8">
    <molecule id="Q86SQ7-1"/>
    <property type="protein sequence ID" value="ENSP00000355499.3"/>
    <property type="gene ID" value="ENSG00000054282.16"/>
</dbReference>
<dbReference type="Ensembl" id="ENST00000622598.3">
    <molecule id="Q86SQ7-1"/>
    <property type="protein sequence ID" value="ENSP00000483550.1"/>
    <property type="gene ID" value="ENSG00000276111.3"/>
</dbReference>
<dbReference type="GeneID" id="10806"/>
<dbReference type="KEGG" id="hsa:10806"/>
<dbReference type="MANE-Select" id="ENST00000366541.8">
    <property type="protein sequence ID" value="ENSP00000355499.3"/>
    <property type="RefSeq nucleotide sequence ID" value="NM_006642.5"/>
    <property type="RefSeq protein sequence ID" value="NP_006633.1"/>
</dbReference>
<dbReference type="UCSC" id="uc001hzw.4">
    <molecule id="Q86SQ7-1"/>
    <property type="organism name" value="human"/>
</dbReference>
<dbReference type="AGR" id="HGNC:10671"/>
<dbReference type="CTD" id="10806"/>
<dbReference type="DisGeNET" id="10806"/>
<dbReference type="GeneCards" id="SDCCAG8"/>
<dbReference type="GeneReviews" id="SDCCAG8"/>
<dbReference type="HGNC" id="HGNC:10671">
    <property type="gene designation" value="SDCCAG8"/>
</dbReference>
<dbReference type="HPA" id="ENSG00000054282">
    <property type="expression patterns" value="Low tissue specificity"/>
</dbReference>
<dbReference type="MalaCards" id="SDCCAG8"/>
<dbReference type="MIM" id="613524">
    <property type="type" value="gene"/>
</dbReference>
<dbReference type="MIM" id="613615">
    <property type="type" value="phenotype"/>
</dbReference>
<dbReference type="MIM" id="615993">
    <property type="type" value="phenotype"/>
</dbReference>
<dbReference type="neXtProt" id="NX_Q86SQ7"/>
<dbReference type="OpenTargets" id="ENSG00000054282"/>
<dbReference type="Orphanet" id="110">
    <property type="disease" value="Bardet-Biedl syndrome"/>
</dbReference>
<dbReference type="Orphanet" id="3156">
    <property type="disease" value="Senior-Loken syndrome"/>
</dbReference>
<dbReference type="PharmGKB" id="PA35601"/>
<dbReference type="VEuPathDB" id="HostDB:ENSG00000054282"/>
<dbReference type="eggNOG" id="ENOG502R5XE">
    <property type="taxonomic scope" value="Eukaryota"/>
</dbReference>
<dbReference type="GeneTree" id="ENSGT00730000111198"/>
<dbReference type="InParanoid" id="Q86SQ7"/>
<dbReference type="OMA" id="SQEKMYT"/>
<dbReference type="OrthoDB" id="10252347at2759"/>
<dbReference type="PAN-GO" id="Q86SQ7">
    <property type="GO annotations" value="6 GO annotations based on evolutionary models"/>
</dbReference>
<dbReference type="PhylomeDB" id="Q86SQ7"/>
<dbReference type="TreeFam" id="TF325472"/>
<dbReference type="PathwayCommons" id="Q86SQ7"/>
<dbReference type="Reactome" id="R-HSA-2565942">
    <property type="pathway name" value="Regulation of PLK1 Activity at G2/M Transition"/>
</dbReference>
<dbReference type="Reactome" id="R-HSA-380259">
    <property type="pathway name" value="Loss of Nlp from mitotic centrosomes"/>
</dbReference>
<dbReference type="Reactome" id="R-HSA-380270">
    <property type="pathway name" value="Recruitment of mitotic centrosome proteins and complexes"/>
</dbReference>
<dbReference type="Reactome" id="R-HSA-380284">
    <property type="pathway name" value="Loss of proteins required for interphase microtubule organization from the centrosome"/>
</dbReference>
<dbReference type="Reactome" id="R-HSA-380320">
    <property type="pathway name" value="Recruitment of NuMA to mitotic centrosomes"/>
</dbReference>
<dbReference type="Reactome" id="R-HSA-5620912">
    <property type="pathway name" value="Anchoring of the basal body to the plasma membrane"/>
</dbReference>
<dbReference type="Reactome" id="R-HSA-8854518">
    <property type="pathway name" value="AURKA Activation by TPX2"/>
</dbReference>
<dbReference type="SignaLink" id="Q86SQ7"/>
<dbReference type="BioGRID-ORCS" id="10806">
    <property type="hits" value="12 hits in 1162 CRISPR screens"/>
</dbReference>
<dbReference type="CD-CODE" id="8C2F96ED">
    <property type="entry name" value="Centrosome"/>
</dbReference>
<dbReference type="ChiTaRS" id="SDCCAG8">
    <property type="organism name" value="human"/>
</dbReference>
<dbReference type="GeneWiki" id="SDCCAG8"/>
<dbReference type="GenomeRNAi" id="10806"/>
<dbReference type="Pharos" id="Q86SQ7">
    <property type="development level" value="Tbio"/>
</dbReference>
<dbReference type="PRO" id="PR:Q86SQ7"/>
<dbReference type="Proteomes" id="UP000005640">
    <property type="component" value="Chromosome 1"/>
</dbReference>
<dbReference type="RNAct" id="Q86SQ7">
    <property type="molecule type" value="protein"/>
</dbReference>
<dbReference type="Bgee" id="ENSG00000054282">
    <property type="expression patterns" value="Expressed in corpus callosum and 102 other cell types or tissues"/>
</dbReference>
<dbReference type="ExpressionAtlas" id="Q86SQ7">
    <property type="expression patterns" value="baseline and differential"/>
</dbReference>
<dbReference type="GO" id="GO:0005911">
    <property type="term" value="C:cell-cell junction"/>
    <property type="evidence" value="ECO:0000314"/>
    <property type="project" value="UniProtKB"/>
</dbReference>
<dbReference type="GO" id="GO:0034451">
    <property type="term" value="C:centriolar satellite"/>
    <property type="evidence" value="ECO:0007669"/>
    <property type="project" value="Ensembl"/>
</dbReference>
<dbReference type="GO" id="GO:0005814">
    <property type="term" value="C:centriole"/>
    <property type="evidence" value="ECO:0000314"/>
    <property type="project" value="UniProtKB"/>
</dbReference>
<dbReference type="GO" id="GO:0005813">
    <property type="term" value="C:centrosome"/>
    <property type="evidence" value="ECO:0000314"/>
    <property type="project" value="HPA"/>
</dbReference>
<dbReference type="GO" id="GO:0036064">
    <property type="term" value="C:ciliary basal body"/>
    <property type="evidence" value="ECO:0000314"/>
    <property type="project" value="HPA"/>
</dbReference>
<dbReference type="GO" id="GO:0005929">
    <property type="term" value="C:cilium"/>
    <property type="evidence" value="ECO:0000314"/>
    <property type="project" value="HPA"/>
</dbReference>
<dbReference type="GO" id="GO:0005829">
    <property type="term" value="C:cytosol"/>
    <property type="evidence" value="ECO:0000314"/>
    <property type="project" value="HPA"/>
</dbReference>
<dbReference type="GO" id="GO:0005654">
    <property type="term" value="C:nucleoplasm"/>
    <property type="evidence" value="ECO:0000314"/>
    <property type="project" value="HPA"/>
</dbReference>
<dbReference type="GO" id="GO:0097733">
    <property type="term" value="C:photoreceptor cell cilium"/>
    <property type="evidence" value="ECO:0007669"/>
    <property type="project" value="Ensembl"/>
</dbReference>
<dbReference type="GO" id="GO:0030030">
    <property type="term" value="P:cell projection organization"/>
    <property type="evidence" value="ECO:0007669"/>
    <property type="project" value="UniProtKB-KW"/>
</dbReference>
<dbReference type="GO" id="GO:0007098">
    <property type="term" value="P:centrosome cycle"/>
    <property type="evidence" value="ECO:0007669"/>
    <property type="project" value="InterPro"/>
</dbReference>
<dbReference type="GO" id="GO:0030010">
    <property type="term" value="P:establishment of cell polarity"/>
    <property type="evidence" value="ECO:0000250"/>
    <property type="project" value="UniProtKB"/>
</dbReference>
<dbReference type="GO" id="GO:0031023">
    <property type="term" value="P:microtubule organizing center organization"/>
    <property type="evidence" value="ECO:0000318"/>
    <property type="project" value="GO_Central"/>
</dbReference>
<dbReference type="GO" id="GO:0001764">
    <property type="term" value="P:neuron migration"/>
    <property type="evidence" value="ECO:0000318"/>
    <property type="project" value="GO_Central"/>
</dbReference>
<dbReference type="GO" id="GO:1902017">
    <property type="term" value="P:regulation of cilium assembly"/>
    <property type="evidence" value="ECO:0000315"/>
    <property type="project" value="UniProtKB"/>
</dbReference>
<dbReference type="GO" id="GO:0035148">
    <property type="term" value="P:tube formation"/>
    <property type="evidence" value="ECO:0000250"/>
    <property type="project" value="UniProtKB"/>
</dbReference>
<dbReference type="InterPro" id="IPR031887">
    <property type="entry name" value="SDCCAG8"/>
</dbReference>
<dbReference type="PANTHER" id="PTHR34343">
    <property type="entry name" value="SEROLOGICALLY DEFINED COLON CANCER ANTIGEN 8"/>
    <property type="match status" value="1"/>
</dbReference>
<dbReference type="PANTHER" id="PTHR34343:SF1">
    <property type="entry name" value="SEROLOGICALLY DEFINED COLON CANCER ANTIGEN 8"/>
    <property type="match status" value="1"/>
</dbReference>
<dbReference type="Pfam" id="PF15964">
    <property type="entry name" value="CCCAP"/>
    <property type="match status" value="1"/>
</dbReference>
<comment type="function">
    <text evidence="2 8">Plays a role in the establishment of cell polarity and epithelial lumen formation (By similarity). Also plays an essential role in ciliogenesis and subsequent Hedgehog signaling pathway that requires the presence of intact primary cilia for pathway activation. Mechanistically, interacts with and mediates RABEP2 centrosomal localization which is critical for ciliogenesis (PubMed:27224062).</text>
</comment>
<comment type="subunit">
    <text evidence="2 5 7 8">Homodimer (By similarity). Interacts with OFD1; the interaction is direct (PubMed:20835237). Interacts with FAM161A (PubMed:22940612). Interacts with RABEP2, ERC1 and CEP131 (PubMed:27224062).</text>
</comment>
<comment type="interaction">
    <interactant intactId="EBI-1047850">
        <id>Q86SQ7</id>
    </interactant>
    <interactant intactId="EBI-2558372">
        <id>Q9UPN4</id>
        <label>CEP131</label>
    </interactant>
    <organismsDiffer>false</organismsDiffer>
    <experiments>3</experiments>
</comment>
<comment type="interaction">
    <interactant intactId="EBI-1047850">
        <id>Q86SQ7</id>
    </interactant>
    <interactant intactId="EBI-3940735">
        <id>Q9H5N1</id>
        <label>RABEP2</label>
    </interactant>
    <organismsDiffer>false</organismsDiffer>
    <experiments>5</experiments>
</comment>
<comment type="interaction">
    <interactant intactId="EBI-1047850">
        <id>Q86SQ7</id>
    </interactant>
    <interactant intactId="EBI-6179719">
        <id>PRO_0000038593</id>
        <label>gag</label>
        <dbReference type="UniProtKB" id="P04591"/>
    </interactant>
    <organismsDiffer>true</organismsDiffer>
    <experiments>2</experiments>
</comment>
<comment type="interaction">
    <interactant intactId="EBI-10696955">
        <id>Q86SQ7-2</id>
    </interactant>
    <interactant intactId="EBI-11954292">
        <id>Q86V38</id>
        <label>ATN1</label>
    </interactant>
    <organismsDiffer>false</organismsDiffer>
    <experiments>3</experiments>
</comment>
<comment type="interaction">
    <interactant intactId="EBI-10696955">
        <id>Q86SQ7-2</id>
    </interactant>
    <interactant intactId="EBI-25837549">
        <id>P28329-3</id>
        <label>CHAT</label>
    </interactant>
    <organismsDiffer>false</organismsDiffer>
    <experiments>3</experiments>
</comment>
<comment type="interaction">
    <interactant intactId="EBI-10696955">
        <id>Q86SQ7-2</id>
    </interactant>
    <interactant intactId="EBI-6875961">
        <id>P02489</id>
        <label>CRYAA</label>
    </interactant>
    <organismsDiffer>false</organismsDiffer>
    <experiments>3</experiments>
</comment>
<comment type="interaction">
    <interactant intactId="EBI-10696955">
        <id>Q86SQ7-2</id>
    </interactant>
    <interactant intactId="EBI-348399">
        <id>P22607</id>
        <label>FGFR3</label>
    </interactant>
    <organismsDiffer>false</organismsDiffer>
    <experiments>3</experiments>
</comment>
<comment type="interaction">
    <interactant intactId="EBI-10696955">
        <id>Q86SQ7-2</id>
    </interactant>
    <interactant intactId="EBI-25913156">
        <id>O14908-2</id>
        <label>GIPC1</label>
    </interactant>
    <organismsDiffer>false</organismsDiffer>
    <experiments>3</experiments>
</comment>
<comment type="interaction">
    <interactant intactId="EBI-10696955">
        <id>Q86SQ7-2</id>
    </interactant>
    <interactant intactId="EBI-2432309">
        <id>Q92876</id>
        <label>KLK6</label>
    </interactant>
    <organismsDiffer>false</organismsDiffer>
    <experiments>3</experiments>
</comment>
<comment type="interaction">
    <interactant intactId="EBI-10696955">
        <id>Q86SQ7-2</id>
    </interactant>
    <interactant intactId="EBI-25900580">
        <id>Q9Y649</id>
    </interactant>
    <organismsDiffer>false</organismsDiffer>
    <experiments>3</experiments>
</comment>
<comment type="subcellular location">
    <subcellularLocation>
        <location>Cytoplasm</location>
        <location>Cytoskeleton</location>
        <location>Microtubule organizing center</location>
        <location>Centrosome</location>
        <location>Centriole</location>
    </subcellularLocation>
    <subcellularLocation>
        <location evidence="8">Cytoplasm</location>
        <location evidence="8">Cytoskeleton</location>
        <location evidence="8">Microtubule organizing center</location>
        <location evidence="8">Centrosome</location>
    </subcellularLocation>
    <subcellularLocation>
        <location evidence="8">Cytoplasm</location>
        <location evidence="8">Cytoskeleton</location>
        <location evidence="8">Cilium basal body</location>
    </subcellularLocation>
    <subcellularLocation>
        <location>Cell junction</location>
    </subcellularLocation>
    <text>Located at the distal ends of both centrioles and colocalizes to centrosomes throughout the cell cycle.</text>
</comment>
<comment type="subcellular location">
    <molecule>Isoform 2</molecule>
    <subcellularLocation>
        <location>Cytoplasm</location>
    </subcellularLocation>
</comment>
<comment type="alternative products">
    <event type="alternative splicing"/>
    <isoform>
        <id>Q86SQ7-1</id>
        <name>1</name>
        <name>a</name>
        <sequence type="displayed"/>
    </isoform>
    <isoform>
        <id>Q86SQ7-2</id>
        <name>2</name>
        <name>e</name>
        <sequence type="described" ref="VSP_016951 VSP_016952"/>
    </isoform>
    <isoform>
        <id>Q86SQ7-3</id>
        <name>3</name>
        <sequence type="described" ref="VSP_016950 VSP_016953"/>
    </isoform>
    <isoform>
        <id>Q86SQ7-4</id>
        <name>4</name>
        <name>b</name>
        <sequence type="described" ref="VSP_016949"/>
    </isoform>
</comment>
<comment type="tissue specificity">
    <text evidence="9">Expressed in thymus, prostate, testis, ovary, small intestine, colon, mucosa, colon and renal cancer tumors.</text>
</comment>
<comment type="disease" evidence="5">
    <disease id="DI-02941">
        <name>Senior-Loken syndrome 7</name>
        <acronym>SLSN7</acronym>
        <description>A renal-retinal disorder characterized by progressive wasting of the filtering unit of the kidney (nephronophthisis), with or without medullary cystic renal disease, and progressive eye disease. Typically this disorder becomes apparent during the first year of life.</description>
        <dbReference type="MIM" id="613615"/>
    </disease>
    <text>The disease is caused by variants affecting the gene represented in this entry.</text>
</comment>
<comment type="disease" evidence="5 6">
    <disease id="DI-04258">
        <name>Bardet-Biedl syndrome 16</name>
        <acronym>BBS16</acronym>
        <description>A syndrome characterized by usually severe pigmentary retinopathy, early-onset obesity, polydactyly, hypogenitalism, renal malformation and intellectual disability. Secondary features include diabetes mellitus, hypertension and congenital heart disease. Bardet-Biedl syndrome inheritance is autosomal recessive, but three mutated alleles (two at one locus, and a third at a second locus) may be required for clinical manifestation of some forms of the disease.</description>
        <dbReference type="MIM" id="615993"/>
    </disease>
    <text>The disease is caused by variants affecting the gene represented in this entry.</text>
</comment>
<accession>Q86SQ7</accession>
<accession>O60527</accession>
<accession>Q3ZCR6</accession>
<accession>Q8N5F2</accession>
<accession>Q9P0F1</accession>